<protein>
    <recommendedName>
        <fullName>Uncharacterized protein K02D10.4</fullName>
    </recommendedName>
</protein>
<feature type="chain" id="PRO_0000065399" description="Uncharacterized protein K02D10.4">
    <location>
        <begin position="1"/>
        <end position="227"/>
    </location>
</feature>
<sequence>MAQYHGTHSIMQSKCFESFAYFQIWLANIEDSRCDGGYLGSSQGPSYEDEYYLLCRRRPSTTTKRRRMSDDCASNELNSSIVACTAFVHVFETMDGRVTVRYCLDHCGHPVEVDDHHRRETKKFENRLTLKRSSPCATYELCDESCDCEQSSSSMASSPSSSVDFEDEDASNNNYKLQESIDAYAVSSLNAIINQRLDSTADRLKTLTKVLQELAVDIRNTDCRMVI</sequence>
<name>YMQ4_CAEEL</name>
<keyword id="KW-1185">Reference proteome</keyword>
<reference key="1">
    <citation type="journal article" date="1994" name="Nature">
        <title>2.2 Mb of contiguous nucleotide sequence from chromosome III of C. elegans.</title>
        <authorList>
            <person name="Wilson R."/>
            <person name="Ainscough R."/>
            <person name="Anderson K."/>
            <person name="Baynes C."/>
            <person name="Berks M."/>
            <person name="Bonfield J."/>
            <person name="Burton J."/>
            <person name="Connell M."/>
            <person name="Copsey T."/>
            <person name="Cooper J."/>
            <person name="Coulson A."/>
            <person name="Craxton M."/>
            <person name="Dear S."/>
            <person name="Du Z."/>
            <person name="Durbin R."/>
            <person name="Favello A."/>
            <person name="Fraser A."/>
            <person name="Fulton L."/>
            <person name="Gardner A."/>
            <person name="Green P."/>
            <person name="Hawkins T."/>
            <person name="Hillier L."/>
            <person name="Jier M."/>
            <person name="Johnston L."/>
            <person name="Jones M."/>
            <person name="Kershaw J."/>
            <person name="Kirsten J."/>
            <person name="Laisster N."/>
            <person name="Latreille P."/>
            <person name="Lightning J."/>
            <person name="Lloyd C."/>
            <person name="Mortimore B."/>
            <person name="O'Callaghan M."/>
            <person name="Parsons J."/>
            <person name="Percy C."/>
            <person name="Rifken L."/>
            <person name="Roopra A."/>
            <person name="Saunders D."/>
            <person name="Shownkeen R."/>
            <person name="Sims M."/>
            <person name="Smaldon N."/>
            <person name="Smith A."/>
            <person name="Smith M."/>
            <person name="Sonnhammer E."/>
            <person name="Staden R."/>
            <person name="Sulston J."/>
            <person name="Thierry-Mieg J."/>
            <person name="Thomas K."/>
            <person name="Vaudin M."/>
            <person name="Vaughan K."/>
            <person name="Waterston R."/>
            <person name="Watson A."/>
            <person name="Weinstock L."/>
            <person name="Wilkinson-Sproat J."/>
            <person name="Wohldman P."/>
        </authorList>
    </citation>
    <scope>NUCLEOTIDE SEQUENCE [LARGE SCALE GENOMIC DNA]</scope>
    <source>
        <strain>Bristol N2</strain>
    </source>
</reference>
<reference key="2">
    <citation type="journal article" date="1998" name="Science">
        <title>Genome sequence of the nematode C. elegans: a platform for investigating biology.</title>
        <authorList>
            <consortium name="The C. elegans sequencing consortium"/>
        </authorList>
    </citation>
    <scope>NUCLEOTIDE SEQUENCE [LARGE SCALE GENOMIC DNA]</scope>
    <source>
        <strain>Bristol N2</strain>
    </source>
</reference>
<gene>
    <name type="ORF">K02D10.4</name>
</gene>
<proteinExistence type="predicted"/>
<accession>P34495</accession>
<organism>
    <name type="scientific">Caenorhabditis elegans</name>
    <dbReference type="NCBI Taxonomy" id="6239"/>
    <lineage>
        <taxon>Eukaryota</taxon>
        <taxon>Metazoa</taxon>
        <taxon>Ecdysozoa</taxon>
        <taxon>Nematoda</taxon>
        <taxon>Chromadorea</taxon>
        <taxon>Rhabditida</taxon>
        <taxon>Rhabditina</taxon>
        <taxon>Rhabditomorpha</taxon>
        <taxon>Rhabditoidea</taxon>
        <taxon>Rhabditidae</taxon>
        <taxon>Peloderinae</taxon>
        <taxon>Caenorhabditis</taxon>
    </lineage>
</organism>
<dbReference type="EMBL" id="FO081469">
    <property type="protein sequence ID" value="CCD71829.1"/>
    <property type="molecule type" value="Genomic_DNA"/>
</dbReference>
<dbReference type="PIR" id="S44836">
    <property type="entry name" value="S44836"/>
</dbReference>
<dbReference type="RefSeq" id="NP_498941.2">
    <property type="nucleotide sequence ID" value="NM_066540.5"/>
</dbReference>
<dbReference type="SMR" id="P34495"/>
<dbReference type="FunCoup" id="P34495">
    <property type="interactions" value="1296"/>
</dbReference>
<dbReference type="STRING" id="6239.K02D10.4.1"/>
<dbReference type="PaxDb" id="6239-K02D10.4.1"/>
<dbReference type="EnsemblMetazoa" id="K02D10.4.1">
    <property type="protein sequence ID" value="K02D10.4.1"/>
    <property type="gene ID" value="WBGene00019304"/>
</dbReference>
<dbReference type="GeneID" id="176234"/>
<dbReference type="KEGG" id="cel:CELE_K02D10.4"/>
<dbReference type="UCSC" id="K02D10.4">
    <property type="organism name" value="c. elegans"/>
</dbReference>
<dbReference type="AGR" id="WB:WBGene00019304"/>
<dbReference type="CTD" id="176234"/>
<dbReference type="WormBase" id="K02D10.4">
    <property type="protein sequence ID" value="CE50521"/>
    <property type="gene ID" value="WBGene00019304"/>
</dbReference>
<dbReference type="eggNOG" id="ENOG502TGPA">
    <property type="taxonomic scope" value="Eukaryota"/>
</dbReference>
<dbReference type="HOGENOM" id="CLU_1046729_0_0_1"/>
<dbReference type="InParanoid" id="P34495"/>
<dbReference type="OrthoDB" id="5874132at2759"/>
<dbReference type="PRO" id="PR:P34495"/>
<dbReference type="Proteomes" id="UP000001940">
    <property type="component" value="Chromosome III"/>
</dbReference>
<dbReference type="Bgee" id="WBGene00019304">
    <property type="expression patterns" value="Expressed in larva and 3 other cell types or tissues"/>
</dbReference>
<dbReference type="InterPro" id="IPR052797">
    <property type="entry name" value="RegFact_GeneExpr_CellDeath"/>
</dbReference>
<dbReference type="PANTHER" id="PTHR33936:SF1">
    <property type="entry name" value="PROTEIN CBG06911"/>
    <property type="match status" value="1"/>
</dbReference>
<dbReference type="PANTHER" id="PTHR33936">
    <property type="entry name" value="PROTEIN CBG17840"/>
    <property type="match status" value="1"/>
</dbReference>